<sequence length="375" mass="42905">MAVTEASLLRQCPLLLPQNRSKTVYEGFISAQGRDFHLRIVLPEDLQLKNARLLCSWQLRTILSGYHRIVQQRMQHSPDLMSFMMELKMLLEVALKNRQELYALPPPPQFYSSLIEEIGTLGWDKLVYADTCFSTIKLKAEDASGREHLITLKLKAKYPAESPDYFVDFPVPFCASWTPQSSLISIYSQFLAAIESLKAFWDVMDEIDEKTWVLEPEKPPRSATARRIALGNNVSINIEVDPRHPTMLPECFFLGADHVVKPLGIKLSRNIHLWDPENSVLQNLKDVLEIDFPARAILEKSDFTMDCGICYAYQLDGTIPDQVCDNSQCGQPFHQICLYEWLRGLLTSRQSFNIIFGECPYCSKPITLKMSGRKH</sequence>
<accession>Q9NW38</accession>
<accession>Q6GU60</accession>
<reference key="1">
    <citation type="journal article" date="2004" name="Nat. Genet.">
        <title>Complete sequencing and characterization of 21,243 full-length human cDNAs.</title>
        <authorList>
            <person name="Ota T."/>
            <person name="Suzuki Y."/>
            <person name="Nishikawa T."/>
            <person name="Otsuki T."/>
            <person name="Sugiyama T."/>
            <person name="Irie R."/>
            <person name="Wakamatsu A."/>
            <person name="Hayashi K."/>
            <person name="Sato H."/>
            <person name="Nagai K."/>
            <person name="Kimura K."/>
            <person name="Makita H."/>
            <person name="Sekine M."/>
            <person name="Obayashi M."/>
            <person name="Nishi T."/>
            <person name="Shibahara T."/>
            <person name="Tanaka T."/>
            <person name="Ishii S."/>
            <person name="Yamamoto J."/>
            <person name="Saito K."/>
            <person name="Kawai Y."/>
            <person name="Isono Y."/>
            <person name="Nakamura Y."/>
            <person name="Nagahari K."/>
            <person name="Murakami K."/>
            <person name="Yasuda T."/>
            <person name="Iwayanagi T."/>
            <person name="Wagatsuma M."/>
            <person name="Shiratori A."/>
            <person name="Sudo H."/>
            <person name="Hosoiri T."/>
            <person name="Kaku Y."/>
            <person name="Kodaira H."/>
            <person name="Kondo H."/>
            <person name="Sugawara M."/>
            <person name="Takahashi M."/>
            <person name="Kanda K."/>
            <person name="Yokoi T."/>
            <person name="Furuya T."/>
            <person name="Kikkawa E."/>
            <person name="Omura Y."/>
            <person name="Abe K."/>
            <person name="Kamihara K."/>
            <person name="Katsuta N."/>
            <person name="Sato K."/>
            <person name="Tanikawa M."/>
            <person name="Yamazaki M."/>
            <person name="Ninomiya K."/>
            <person name="Ishibashi T."/>
            <person name="Yamashita H."/>
            <person name="Murakawa K."/>
            <person name="Fujimori K."/>
            <person name="Tanai H."/>
            <person name="Kimata M."/>
            <person name="Watanabe M."/>
            <person name="Hiraoka S."/>
            <person name="Chiba Y."/>
            <person name="Ishida S."/>
            <person name="Ono Y."/>
            <person name="Takiguchi S."/>
            <person name="Watanabe S."/>
            <person name="Yosida M."/>
            <person name="Hotuta T."/>
            <person name="Kusano J."/>
            <person name="Kanehori K."/>
            <person name="Takahashi-Fujii A."/>
            <person name="Hara H."/>
            <person name="Tanase T.-O."/>
            <person name="Nomura Y."/>
            <person name="Togiya S."/>
            <person name="Komai F."/>
            <person name="Hara R."/>
            <person name="Takeuchi K."/>
            <person name="Arita M."/>
            <person name="Imose N."/>
            <person name="Musashino K."/>
            <person name="Yuuki H."/>
            <person name="Oshima A."/>
            <person name="Sasaki N."/>
            <person name="Aotsuka S."/>
            <person name="Yoshikawa Y."/>
            <person name="Matsunawa H."/>
            <person name="Ichihara T."/>
            <person name="Shiohata N."/>
            <person name="Sano S."/>
            <person name="Moriya S."/>
            <person name="Momiyama H."/>
            <person name="Satoh N."/>
            <person name="Takami S."/>
            <person name="Terashima Y."/>
            <person name="Suzuki O."/>
            <person name="Nakagawa S."/>
            <person name="Senoh A."/>
            <person name="Mizoguchi H."/>
            <person name="Goto Y."/>
            <person name="Shimizu F."/>
            <person name="Wakebe H."/>
            <person name="Hishigaki H."/>
            <person name="Watanabe T."/>
            <person name="Sugiyama A."/>
            <person name="Takemoto M."/>
            <person name="Kawakami B."/>
            <person name="Yamazaki M."/>
            <person name="Watanabe K."/>
            <person name="Kumagai A."/>
            <person name="Itakura S."/>
            <person name="Fukuzumi Y."/>
            <person name="Fujimori Y."/>
            <person name="Komiyama M."/>
            <person name="Tashiro H."/>
            <person name="Tanigami A."/>
            <person name="Fujiwara T."/>
            <person name="Ono T."/>
            <person name="Yamada K."/>
            <person name="Fujii Y."/>
            <person name="Ozaki K."/>
            <person name="Hirao M."/>
            <person name="Ohmori Y."/>
            <person name="Kawabata A."/>
            <person name="Hikiji T."/>
            <person name="Kobatake N."/>
            <person name="Inagaki H."/>
            <person name="Ikema Y."/>
            <person name="Okamoto S."/>
            <person name="Okitani R."/>
            <person name="Kawakami T."/>
            <person name="Noguchi S."/>
            <person name="Itoh T."/>
            <person name="Shigeta K."/>
            <person name="Senba T."/>
            <person name="Matsumura K."/>
            <person name="Nakajima Y."/>
            <person name="Mizuno T."/>
            <person name="Morinaga M."/>
            <person name="Sasaki M."/>
            <person name="Togashi T."/>
            <person name="Oyama M."/>
            <person name="Hata H."/>
            <person name="Watanabe M."/>
            <person name="Komatsu T."/>
            <person name="Mizushima-Sugano J."/>
            <person name="Satoh T."/>
            <person name="Shirai Y."/>
            <person name="Takahashi Y."/>
            <person name="Nakagawa K."/>
            <person name="Okumura K."/>
            <person name="Nagase T."/>
            <person name="Nomura N."/>
            <person name="Kikuchi H."/>
            <person name="Masuho Y."/>
            <person name="Yamashita R."/>
            <person name="Nakai K."/>
            <person name="Yada T."/>
            <person name="Nakamura Y."/>
            <person name="Ohara O."/>
            <person name="Isogai T."/>
            <person name="Sugano S."/>
        </authorList>
    </citation>
    <scope>NUCLEOTIDE SEQUENCE [LARGE SCALE MRNA] (ISOFORM 1)</scope>
    <source>
        <tissue>Teratocarcinoma</tissue>
    </source>
</reference>
<reference key="2">
    <citation type="journal article" date="2005" name="Nature">
        <title>Generation and annotation of the DNA sequences of human chromosomes 2 and 4.</title>
        <authorList>
            <person name="Hillier L.W."/>
            <person name="Graves T.A."/>
            <person name="Fulton R.S."/>
            <person name="Fulton L.A."/>
            <person name="Pepin K.H."/>
            <person name="Minx P."/>
            <person name="Wagner-McPherson C."/>
            <person name="Layman D."/>
            <person name="Wylie K."/>
            <person name="Sekhon M."/>
            <person name="Becker M.C."/>
            <person name="Fewell G.A."/>
            <person name="Delehaunty K.D."/>
            <person name="Miner T.L."/>
            <person name="Nash W.E."/>
            <person name="Kremitzki C."/>
            <person name="Oddy L."/>
            <person name="Du H."/>
            <person name="Sun H."/>
            <person name="Bradshaw-Cordum H."/>
            <person name="Ali J."/>
            <person name="Carter J."/>
            <person name="Cordes M."/>
            <person name="Harris A."/>
            <person name="Isak A."/>
            <person name="van Brunt A."/>
            <person name="Nguyen C."/>
            <person name="Du F."/>
            <person name="Courtney L."/>
            <person name="Kalicki J."/>
            <person name="Ozersky P."/>
            <person name="Abbott S."/>
            <person name="Armstrong J."/>
            <person name="Belter E.A."/>
            <person name="Caruso L."/>
            <person name="Cedroni M."/>
            <person name="Cotton M."/>
            <person name="Davidson T."/>
            <person name="Desai A."/>
            <person name="Elliott G."/>
            <person name="Erb T."/>
            <person name="Fronick C."/>
            <person name="Gaige T."/>
            <person name="Haakenson W."/>
            <person name="Haglund K."/>
            <person name="Holmes A."/>
            <person name="Harkins R."/>
            <person name="Kim K."/>
            <person name="Kruchowski S.S."/>
            <person name="Strong C.M."/>
            <person name="Grewal N."/>
            <person name="Goyea E."/>
            <person name="Hou S."/>
            <person name="Levy A."/>
            <person name="Martinka S."/>
            <person name="Mead K."/>
            <person name="McLellan M.D."/>
            <person name="Meyer R."/>
            <person name="Randall-Maher J."/>
            <person name="Tomlinson C."/>
            <person name="Dauphin-Kohlberg S."/>
            <person name="Kozlowicz-Reilly A."/>
            <person name="Shah N."/>
            <person name="Swearengen-Shahid S."/>
            <person name="Snider J."/>
            <person name="Strong J.T."/>
            <person name="Thompson J."/>
            <person name="Yoakum M."/>
            <person name="Leonard S."/>
            <person name="Pearman C."/>
            <person name="Trani L."/>
            <person name="Radionenko M."/>
            <person name="Waligorski J.E."/>
            <person name="Wang C."/>
            <person name="Rock S.M."/>
            <person name="Tin-Wollam A.-M."/>
            <person name="Maupin R."/>
            <person name="Latreille P."/>
            <person name="Wendl M.C."/>
            <person name="Yang S.-P."/>
            <person name="Pohl C."/>
            <person name="Wallis J.W."/>
            <person name="Spieth J."/>
            <person name="Bieri T.A."/>
            <person name="Berkowicz N."/>
            <person name="Nelson J.O."/>
            <person name="Osborne J."/>
            <person name="Ding L."/>
            <person name="Meyer R."/>
            <person name="Sabo A."/>
            <person name="Shotland Y."/>
            <person name="Sinha P."/>
            <person name="Wohldmann P.E."/>
            <person name="Cook L.L."/>
            <person name="Hickenbotham M.T."/>
            <person name="Eldred J."/>
            <person name="Williams D."/>
            <person name="Jones T.A."/>
            <person name="She X."/>
            <person name="Ciccarelli F.D."/>
            <person name="Izaurralde E."/>
            <person name="Taylor J."/>
            <person name="Schmutz J."/>
            <person name="Myers R.M."/>
            <person name="Cox D.R."/>
            <person name="Huang X."/>
            <person name="McPherson J.D."/>
            <person name="Mardis E.R."/>
            <person name="Clifton S.W."/>
            <person name="Warren W.C."/>
            <person name="Chinwalla A.T."/>
            <person name="Eddy S.R."/>
            <person name="Marra M.A."/>
            <person name="Ovcharenko I."/>
            <person name="Furey T.S."/>
            <person name="Miller W."/>
            <person name="Eichler E.E."/>
            <person name="Bork P."/>
            <person name="Suyama M."/>
            <person name="Torrents D."/>
            <person name="Waterston R.H."/>
            <person name="Wilson R.K."/>
        </authorList>
    </citation>
    <scope>NUCLEOTIDE SEQUENCE [LARGE SCALE GENOMIC DNA]</scope>
</reference>
<reference key="3">
    <citation type="journal article" date="2004" name="Genome Res.">
        <title>The status, quality, and expansion of the NIH full-length cDNA project: the Mammalian Gene Collection (MGC).</title>
        <authorList>
            <consortium name="The MGC Project Team"/>
        </authorList>
    </citation>
    <scope>NUCLEOTIDE SEQUENCE [LARGE SCALE MRNA] (ISOFORMS 1 AND 2)</scope>
    <source>
        <tissue>Brain</tissue>
        <tissue>Eye</tissue>
    </source>
</reference>
<reference key="4">
    <citation type="journal article" date="2003" name="Mol. Cell. Biol.">
        <title>A multiprotein nuclear complex connects Fanconi anemia and Bloom syndrome.</title>
        <authorList>
            <person name="Meetei A.R."/>
            <person name="Sechi S."/>
            <person name="Wallisch M."/>
            <person name="Yang D."/>
            <person name="Young M.K."/>
            <person name="Joenje H."/>
            <person name="Hoatlin M.E."/>
            <person name="Wang W."/>
        </authorList>
    </citation>
    <scope>IDENTIFICATION BY MASS SPECTROMETRY IN A BRAFT COMPLEX WITH FANCA; FANCC; FANCE; FANCF AND FANCG</scope>
</reference>
<reference key="5">
    <citation type="journal article" date="2003" name="Nat. Genet.">
        <title>A novel ubiquitin ligase is deficient in Fanconi anemia.</title>
        <authorList>
            <person name="Meetei A.R."/>
            <person name="de Winter J.P."/>
            <person name="Medhurst A.L."/>
            <person name="Wallisch M."/>
            <person name="Waisfisz Q."/>
            <person name="van de Vrugt H.J."/>
            <person name="Oostra A.B."/>
            <person name="Yan Z."/>
            <person name="Ling C."/>
            <person name="Bishop C.E."/>
            <person name="Hoatlin M.E."/>
            <person name="Joenje H."/>
            <person name="Wang W."/>
        </authorList>
    </citation>
    <scope>FUNCTION</scope>
    <scope>CATALYTIC ACTIVITY</scope>
    <scope>SUBCELLULAR LOCATION</scope>
    <scope>INVOLVEMENT IN FANCL</scope>
    <scope>INTERACTION WITH FANCA; FANCC; FANCF AND FANCG</scope>
    <scope>MUTAGENESIS OF CYS-307 AND CYS-310</scope>
</reference>
<reference key="6">
    <citation type="journal article" date="2004" name="Nat. Genet.">
        <title>X-linked inheritance of Fanconi anemia complementation group B.</title>
        <authorList>
            <person name="Meetei A.R."/>
            <person name="Levitus M."/>
            <person name="Xue Y."/>
            <person name="Medhurst A.L."/>
            <person name="Zwaan M."/>
            <person name="Ling C."/>
            <person name="Rooimans M.A."/>
            <person name="Bier P."/>
            <person name="Hoatlin M."/>
            <person name="Pals G."/>
            <person name="de Winter J.P."/>
            <person name="Wang W."/>
            <person name="Joenje H."/>
        </authorList>
    </citation>
    <scope>IDENTIFICATION IN A COMPLEX WITH FANCA; FANCB; FANCC; FANCE; FANCF AND FANCLG</scope>
</reference>
<reference key="7">
    <citation type="journal article" date="2005" name="Nat. Genet.">
        <title>A human ortholog of archaeal DNA repair protein Hef is defective in Fanconi anemia complementation group M.</title>
        <authorList>
            <person name="Meetei A.R."/>
            <person name="Medhurst A.L."/>
            <person name="Ling C."/>
            <person name="Xue Y."/>
            <person name="Singh T.R."/>
            <person name="Bier P."/>
            <person name="Steltenpool J."/>
            <person name="Stone S."/>
            <person name="Dokal I."/>
            <person name="Mathew C.G."/>
            <person name="Hoatlin M."/>
            <person name="Joenje H."/>
            <person name="de Winter J.P."/>
            <person name="Wang W."/>
        </authorList>
    </citation>
    <scope>IDENTIFICATION IN A COMPLEX WITH FANCA; FANCB; FANCC; FANCE; FANCF; FANCG AND FANCM</scope>
</reference>
<reference key="8">
    <citation type="journal article" date="2006" name="Mol. Cell">
        <title>UBE2T is the E2 in the Fanconi anemia pathway and undergoes negative autoregulation.</title>
        <authorList>
            <person name="Machida Y.J."/>
            <person name="Machida Y."/>
            <person name="Chen Y."/>
            <person name="Gurtan A.M."/>
            <person name="Kupfer G.M."/>
            <person name="D'Andrea A.D."/>
            <person name="Dutta A."/>
        </authorList>
    </citation>
    <scope>FUNCTION</scope>
    <scope>CATALYTIC ACTIVITY</scope>
    <scope>INTERACTION WITH UBE2T</scope>
    <scope>UBIQUITINATION</scope>
    <scope>MUTAGENESIS OF CYS-307 AND TRP-341</scope>
</reference>
<reference key="9">
    <citation type="journal article" date="2007" name="Mol. Cell. Biol.">
        <title>UBE2T, the Fanconi anemia core complex, and FANCD2 are recruited independently to chromatin: a basis for the regulation of FANCD2 monoubiquitination.</title>
        <authorList>
            <person name="Alpi A."/>
            <person name="Langevin F."/>
            <person name="Mosedale G."/>
            <person name="Machida Y.J."/>
            <person name="Dutta A."/>
            <person name="Patel K.J."/>
        </authorList>
    </citation>
    <scope>FUNCTION</scope>
    <scope>INTERACTION WITH UBE2T</scope>
    <scope>MUTAGENESIS OF CYS-307 AND CYS-310</scope>
</reference>
<reference key="10">
    <citation type="journal article" date="2008" name="Blood">
        <title>HES1 is a novel interactor of the Fanconi anemia core complex.</title>
        <authorList>
            <person name="Tremblay C.S."/>
            <person name="Huang F.F."/>
            <person name="Habi O."/>
            <person name="Huard C.C."/>
            <person name="Godin C."/>
            <person name="Levesque G."/>
            <person name="Carreau M."/>
        </authorList>
    </citation>
    <scope>INTERACTION WITH HES1</scope>
    <scope>SUBCELLULAR LOCATION</scope>
</reference>
<reference key="11">
    <citation type="journal article" date="2008" name="Mol. Cell">
        <title>Mechanistic insight into site-restricted monoubiquitination of FANCD2 by Ube2t, FANCL, and FANCI.</title>
        <authorList>
            <person name="Alpi A.F."/>
            <person name="Pace P.E."/>
            <person name="Babu M.M."/>
            <person name="Patel K.J."/>
        </authorList>
    </citation>
    <scope>FUNCTION</scope>
    <scope>CATALYTIC ACTIVITY</scope>
    <scope>INTERACTION WITH UBE2T AND UBE2W</scope>
    <scope>MUTAGENESIS OF 158-TYR-PRO-159; CYS-307 AND CYS-359</scope>
</reference>
<reference key="12">
    <citation type="journal article" date="2009" name="J. Biol. Chem.">
        <title>FANCI binds branched DNA and is monoubiquitinated by UBE2T-FANCL.</title>
        <authorList>
            <person name="Longerich S."/>
            <person name="San Filippo J."/>
            <person name="Liu D."/>
            <person name="Sung P."/>
        </authorList>
    </citation>
    <scope>FUNCTION</scope>
    <scope>CATALYTIC ACTIVITY</scope>
    <scope>MUTAGENESIS OF CYS-307</scope>
</reference>
<reference key="13">
    <citation type="journal article" date="2012" name="Blood">
        <title>FAAP20: a novel ubiquitin-binding FA nuclear core-complex protein required for functional integrity of the FA-BRCA DNA repair pathway.</title>
        <authorList>
            <person name="Ali A.M."/>
            <person name="Pradhan A."/>
            <person name="Singh T.R."/>
            <person name="Du C."/>
            <person name="Li J."/>
            <person name="Wahengbam K."/>
            <person name="Grassman E."/>
            <person name="Auerbach A.D."/>
            <person name="Pang Q."/>
            <person name="Meetei A.R."/>
        </authorList>
    </citation>
    <scope>IDENTIFICATION IN THE FA COMPLEX</scope>
</reference>
<reference key="14">
    <citation type="journal article" date="2012" name="Proc. Natl. Acad. Sci. U.S.A.">
        <title>N-terminal acetylome analyses and functional insights of the N-terminal acetyltransferase NatB.</title>
        <authorList>
            <person name="Van Damme P."/>
            <person name="Lasa M."/>
            <person name="Polevoda B."/>
            <person name="Gazquez C."/>
            <person name="Elosegui-Artola A."/>
            <person name="Kim D.S."/>
            <person name="De Juan-Pardo E."/>
            <person name="Demeyer K."/>
            <person name="Hole K."/>
            <person name="Larrea E."/>
            <person name="Timmerman E."/>
            <person name="Prieto J."/>
            <person name="Arnesen T."/>
            <person name="Sherman F."/>
            <person name="Gevaert K."/>
            <person name="Aldabe R."/>
        </authorList>
    </citation>
    <scope>ACETYLATION [LARGE SCALE ANALYSIS] AT ALA-2</scope>
    <scope>CLEAVAGE OF INITIATOR METHIONINE [LARGE SCALE ANALYSIS]</scope>
    <scope>IDENTIFICATION BY MASS SPECTROMETRY [LARGE SCALE ANALYSIS]</scope>
</reference>
<reference key="15">
    <citation type="journal article" date="2011" name="J. Biol. Chem.">
        <title>Structural analysis of human FANCL, the E3 ligase in the Fanconi anemia pathway.</title>
        <authorList>
            <person name="Hodson C."/>
            <person name="Cole A.R."/>
            <person name="Lewis L.P."/>
            <person name="Miles J.A."/>
            <person name="Purkiss A."/>
            <person name="Walden H."/>
        </authorList>
    </citation>
    <scope>X-RAY CRYSTALLOGRAPHY (2.0 ANGSTROMS) OF 109-294</scope>
    <scope>INTERACTION WITH FANCI AND UBE2T</scope>
    <scope>MUTAGENESIS OF 127-VAL-TYR-128; LEU-149; PHE-166; 212-TRP--LEU-214; LEU-248; PHE-252; LEU-254 AND ILE-265</scope>
</reference>
<reference evidence="16" key="16">
    <citation type="journal article" date="2014" name="Structure">
        <title>Structure of the human FANCL RING-Ube2T complex reveals determinants of cognate E3-E2 selection.</title>
        <authorList>
            <person name="Hodson C."/>
            <person name="Purkiss A."/>
            <person name="Miles J.A."/>
            <person name="Walden H."/>
        </authorList>
    </citation>
    <scope>X-RAY CRYSTALLOGRAPHY (2.40 ANGSTROMS) OF 299-373 IN COMPLEX WITH ZINC</scope>
    <scope>FUNCTION</scope>
    <scope>INTERACTION WITH UBE2T</scope>
    <scope>MUTAGENESIS OF ILE-309; TYR-311 AND TRP-341</scope>
</reference>
<organism>
    <name type="scientific">Homo sapiens</name>
    <name type="common">Human</name>
    <dbReference type="NCBI Taxonomy" id="9606"/>
    <lineage>
        <taxon>Eukaryota</taxon>
        <taxon>Metazoa</taxon>
        <taxon>Chordata</taxon>
        <taxon>Craniata</taxon>
        <taxon>Vertebrata</taxon>
        <taxon>Euteleostomi</taxon>
        <taxon>Mammalia</taxon>
        <taxon>Eutheria</taxon>
        <taxon>Euarchontoglires</taxon>
        <taxon>Primates</taxon>
        <taxon>Haplorrhini</taxon>
        <taxon>Catarrhini</taxon>
        <taxon>Hominidae</taxon>
        <taxon>Homo</taxon>
    </lineage>
</organism>
<dbReference type="EC" id="2.3.2.27" evidence="3 6 9 10"/>
<dbReference type="EMBL" id="AK001197">
    <property type="protein sequence ID" value="BAA91548.1"/>
    <property type="molecule type" value="mRNA"/>
</dbReference>
<dbReference type="EMBL" id="AC007250">
    <property type="protein sequence ID" value="AAY15020.1"/>
    <property type="molecule type" value="Genomic_DNA"/>
</dbReference>
<dbReference type="EMBL" id="BC009042">
    <property type="protein sequence ID" value="AAH09042.1"/>
    <property type="molecule type" value="mRNA"/>
</dbReference>
<dbReference type="EMBL" id="BC054517">
    <property type="protein sequence ID" value="AAH54517.1"/>
    <property type="molecule type" value="mRNA"/>
</dbReference>
<dbReference type="EMBL" id="BC037570">
    <property type="status" value="NOT_ANNOTATED_CDS"/>
    <property type="molecule type" value="mRNA"/>
</dbReference>
<dbReference type="CCDS" id="CCDS1860.1">
    <molecule id="Q9NW38-1"/>
</dbReference>
<dbReference type="CCDS" id="CCDS46294.1">
    <molecule id="Q9NW38-2"/>
</dbReference>
<dbReference type="RefSeq" id="NP_001108108.1">
    <molecule id="Q9NW38-2"/>
    <property type="nucleotide sequence ID" value="NM_001114636.2"/>
</dbReference>
<dbReference type="RefSeq" id="NP_060532.2">
    <molecule id="Q9NW38-1"/>
    <property type="nucleotide sequence ID" value="NM_018062.3"/>
</dbReference>
<dbReference type="PDB" id="3ZQS">
    <property type="method" value="X-ray"/>
    <property type="resolution" value="2.00 A"/>
    <property type="chains" value="A/B=109-294"/>
</dbReference>
<dbReference type="PDB" id="4CCG">
    <property type="method" value="X-ray"/>
    <property type="resolution" value="2.40 A"/>
    <property type="chains" value="X/Y=288-375"/>
</dbReference>
<dbReference type="PDB" id="7KZP">
    <property type="method" value="EM"/>
    <property type="resolution" value="3.10 A"/>
    <property type="chains" value="L/M=1-375"/>
</dbReference>
<dbReference type="PDB" id="7KZQ">
    <property type="method" value="EM"/>
    <property type="resolution" value="4.20 A"/>
    <property type="chains" value="L/M=1-375"/>
</dbReference>
<dbReference type="PDB" id="7KZR">
    <property type="method" value="EM"/>
    <property type="resolution" value="4.20 A"/>
    <property type="chains" value="L/M=1-375"/>
</dbReference>
<dbReference type="PDB" id="7KZS">
    <property type="method" value="EM"/>
    <property type="resolution" value="4.20 A"/>
    <property type="chains" value="L/M=1-375"/>
</dbReference>
<dbReference type="PDB" id="7KZT">
    <property type="method" value="EM"/>
    <property type="resolution" value="4.20 A"/>
    <property type="chains" value="L/M=1-375"/>
</dbReference>
<dbReference type="PDB" id="7KZV">
    <property type="method" value="EM"/>
    <property type="resolution" value="4.20 A"/>
    <property type="chains" value="L/M=1-375"/>
</dbReference>
<dbReference type="PDBsum" id="3ZQS"/>
<dbReference type="PDBsum" id="4CCG"/>
<dbReference type="PDBsum" id="7KZP"/>
<dbReference type="PDBsum" id="7KZQ"/>
<dbReference type="PDBsum" id="7KZR"/>
<dbReference type="PDBsum" id="7KZS"/>
<dbReference type="PDBsum" id="7KZT"/>
<dbReference type="PDBsum" id="7KZV"/>
<dbReference type="EMDB" id="EMD-23085"/>
<dbReference type="EMDB" id="EMD-23086"/>
<dbReference type="EMDB" id="EMD-23087"/>
<dbReference type="EMDB" id="EMD-23088"/>
<dbReference type="EMDB" id="EMD-23089"/>
<dbReference type="EMDB" id="EMD-23090"/>
<dbReference type="SMR" id="Q9NW38"/>
<dbReference type="BioGRID" id="120429">
    <property type="interactions" value="72"/>
</dbReference>
<dbReference type="ComplexPortal" id="CPX-6263">
    <property type="entry name" value="Fanconi anemia ubiquitin ligase complex"/>
</dbReference>
<dbReference type="CORUM" id="Q9NW38"/>
<dbReference type="DIP" id="DIP-43975N"/>
<dbReference type="FunCoup" id="Q9NW38">
    <property type="interactions" value="3136"/>
</dbReference>
<dbReference type="IntAct" id="Q9NW38">
    <property type="interactions" value="60"/>
</dbReference>
<dbReference type="MINT" id="Q9NW38"/>
<dbReference type="STRING" id="9606.ENSP00000385021"/>
<dbReference type="iPTMnet" id="Q9NW38"/>
<dbReference type="PhosphoSitePlus" id="Q9NW38"/>
<dbReference type="BioMuta" id="FANCL"/>
<dbReference type="DMDM" id="116241360"/>
<dbReference type="jPOST" id="Q9NW38"/>
<dbReference type="MassIVE" id="Q9NW38"/>
<dbReference type="PaxDb" id="9606-ENSP00000385021"/>
<dbReference type="PeptideAtlas" id="Q9NW38"/>
<dbReference type="ProteomicsDB" id="82894">
    <molecule id="Q9NW38-1"/>
</dbReference>
<dbReference type="ProteomicsDB" id="82895">
    <molecule id="Q9NW38-2"/>
</dbReference>
<dbReference type="Pumba" id="Q9NW38"/>
<dbReference type="Antibodypedia" id="30496">
    <property type="antibodies" value="229 antibodies from 31 providers"/>
</dbReference>
<dbReference type="DNASU" id="55120"/>
<dbReference type="Ensembl" id="ENST00000233741.9">
    <molecule id="Q9NW38-1"/>
    <property type="protein sequence ID" value="ENSP00000233741.5"/>
    <property type="gene ID" value="ENSG00000115392.13"/>
</dbReference>
<dbReference type="Ensembl" id="ENST00000402135.8">
    <molecule id="Q9NW38-2"/>
    <property type="protein sequence ID" value="ENSP00000385021.3"/>
    <property type="gene ID" value="ENSG00000115392.13"/>
</dbReference>
<dbReference type="GeneID" id="55120"/>
<dbReference type="KEGG" id="hsa:55120"/>
<dbReference type="MANE-Select" id="ENST00000233741.9">
    <property type="protein sequence ID" value="ENSP00000233741.5"/>
    <property type="RefSeq nucleotide sequence ID" value="NM_018062.4"/>
    <property type="RefSeq protein sequence ID" value="NP_060532.2"/>
</dbReference>
<dbReference type="UCSC" id="uc002rzw.5">
    <molecule id="Q9NW38-1"/>
    <property type="organism name" value="human"/>
</dbReference>
<dbReference type="AGR" id="HGNC:20748"/>
<dbReference type="CTD" id="55120"/>
<dbReference type="DisGeNET" id="55120"/>
<dbReference type="GeneCards" id="FANCL"/>
<dbReference type="GeneReviews" id="FANCL"/>
<dbReference type="HGNC" id="HGNC:20748">
    <property type="gene designation" value="FANCL"/>
</dbReference>
<dbReference type="HPA" id="ENSG00000115392">
    <property type="expression patterns" value="Low tissue specificity"/>
</dbReference>
<dbReference type="MalaCards" id="FANCL"/>
<dbReference type="MIM" id="608111">
    <property type="type" value="gene"/>
</dbReference>
<dbReference type="MIM" id="614083">
    <property type="type" value="phenotype"/>
</dbReference>
<dbReference type="neXtProt" id="NX_Q9NW38"/>
<dbReference type="OpenTargets" id="ENSG00000115392"/>
<dbReference type="Orphanet" id="84">
    <property type="disease" value="Fanconi anemia"/>
</dbReference>
<dbReference type="PharmGKB" id="PA134887656"/>
<dbReference type="VEuPathDB" id="HostDB:ENSG00000115392"/>
<dbReference type="eggNOG" id="KOG3268">
    <property type="taxonomic scope" value="Eukaryota"/>
</dbReference>
<dbReference type="GeneTree" id="ENSGT00390000005537"/>
<dbReference type="InParanoid" id="Q9NW38"/>
<dbReference type="OMA" id="NRPFHAK"/>
<dbReference type="OrthoDB" id="10263265at2759"/>
<dbReference type="PAN-GO" id="Q9NW38">
    <property type="GO annotations" value="4 GO annotations based on evolutionary models"/>
</dbReference>
<dbReference type="PhylomeDB" id="Q9NW38"/>
<dbReference type="TreeFam" id="TF323571"/>
<dbReference type="BRENDA" id="2.3.2.27">
    <property type="organism ID" value="2681"/>
</dbReference>
<dbReference type="PathwayCommons" id="Q9NW38"/>
<dbReference type="Reactome" id="R-HSA-6783310">
    <property type="pathway name" value="Fanconi Anemia Pathway"/>
</dbReference>
<dbReference type="Reactome" id="R-HSA-9833482">
    <property type="pathway name" value="PKR-mediated signaling"/>
</dbReference>
<dbReference type="SignaLink" id="Q9NW38"/>
<dbReference type="SIGNOR" id="Q9NW38"/>
<dbReference type="UniPathway" id="UPA00143"/>
<dbReference type="BioGRID-ORCS" id="55120">
    <property type="hits" value="111 hits in 1207 CRISPR screens"/>
</dbReference>
<dbReference type="ChiTaRS" id="FANCL">
    <property type="organism name" value="human"/>
</dbReference>
<dbReference type="EvolutionaryTrace" id="Q9NW38"/>
<dbReference type="GeneWiki" id="FANCL"/>
<dbReference type="GenomeRNAi" id="55120"/>
<dbReference type="Pharos" id="Q9NW38">
    <property type="development level" value="Tbio"/>
</dbReference>
<dbReference type="PRO" id="PR:Q9NW38"/>
<dbReference type="Proteomes" id="UP000005640">
    <property type="component" value="Chromosome 2"/>
</dbReference>
<dbReference type="RNAct" id="Q9NW38">
    <property type="molecule type" value="protein"/>
</dbReference>
<dbReference type="Bgee" id="ENSG00000115392">
    <property type="expression patterns" value="Expressed in pituitary gland and 201 other cell types or tissues"/>
</dbReference>
<dbReference type="ExpressionAtlas" id="Q9NW38">
    <property type="expression patterns" value="baseline and differential"/>
</dbReference>
<dbReference type="GO" id="GO:0000785">
    <property type="term" value="C:chromatin"/>
    <property type="evidence" value="ECO:0000314"/>
    <property type="project" value="ComplexPortal"/>
</dbReference>
<dbReference type="GO" id="GO:0005829">
    <property type="term" value="C:cytosol"/>
    <property type="evidence" value="ECO:0000304"/>
    <property type="project" value="Reactome"/>
</dbReference>
<dbReference type="GO" id="GO:0043240">
    <property type="term" value="C:Fanconi anaemia nuclear complex"/>
    <property type="evidence" value="ECO:0000314"/>
    <property type="project" value="UniProtKB"/>
</dbReference>
<dbReference type="GO" id="GO:0043231">
    <property type="term" value="C:intracellular membrane-bounded organelle"/>
    <property type="evidence" value="ECO:0000314"/>
    <property type="project" value="HPA"/>
</dbReference>
<dbReference type="GO" id="GO:0016604">
    <property type="term" value="C:nuclear body"/>
    <property type="evidence" value="ECO:0000314"/>
    <property type="project" value="HPA"/>
</dbReference>
<dbReference type="GO" id="GO:0005635">
    <property type="term" value="C:nuclear envelope"/>
    <property type="evidence" value="ECO:0007669"/>
    <property type="project" value="Ensembl"/>
</dbReference>
<dbReference type="GO" id="GO:0005654">
    <property type="term" value="C:nucleoplasm"/>
    <property type="evidence" value="ECO:0000304"/>
    <property type="project" value="Reactome"/>
</dbReference>
<dbReference type="GO" id="GO:0005634">
    <property type="term" value="C:nucleus"/>
    <property type="evidence" value="ECO:0000318"/>
    <property type="project" value="GO_Central"/>
</dbReference>
<dbReference type="GO" id="GO:0061630">
    <property type="term" value="F:ubiquitin protein ligase activity"/>
    <property type="evidence" value="ECO:0000314"/>
    <property type="project" value="MGI"/>
</dbReference>
<dbReference type="GO" id="GO:0031625">
    <property type="term" value="F:ubiquitin protein ligase binding"/>
    <property type="evidence" value="ECO:0000353"/>
    <property type="project" value="UniProtKB"/>
</dbReference>
<dbReference type="GO" id="GO:0004842">
    <property type="term" value="F:ubiquitin-protein transferase activity"/>
    <property type="evidence" value="ECO:0000314"/>
    <property type="project" value="UniProtKB"/>
</dbReference>
<dbReference type="GO" id="GO:0008270">
    <property type="term" value="F:zinc ion binding"/>
    <property type="evidence" value="ECO:0007669"/>
    <property type="project" value="UniProtKB-KW"/>
</dbReference>
<dbReference type="GO" id="GO:0006974">
    <property type="term" value="P:DNA damage response"/>
    <property type="evidence" value="ECO:0000315"/>
    <property type="project" value="UniProtKB"/>
</dbReference>
<dbReference type="GO" id="GO:0006281">
    <property type="term" value="P:DNA repair"/>
    <property type="evidence" value="ECO:0000315"/>
    <property type="project" value="UniProtKB"/>
</dbReference>
<dbReference type="GO" id="GO:0007276">
    <property type="term" value="P:gamete generation"/>
    <property type="evidence" value="ECO:0007669"/>
    <property type="project" value="Ensembl"/>
</dbReference>
<dbReference type="GO" id="GO:0036297">
    <property type="term" value="P:interstrand cross-link repair"/>
    <property type="evidence" value="ECO:0000303"/>
    <property type="project" value="ComplexPortal"/>
</dbReference>
<dbReference type="GO" id="GO:0006513">
    <property type="term" value="P:protein monoubiquitination"/>
    <property type="evidence" value="ECO:0000314"/>
    <property type="project" value="UniProtKB"/>
</dbReference>
<dbReference type="GO" id="GO:0042127">
    <property type="term" value="P:regulation of cell population proliferation"/>
    <property type="evidence" value="ECO:0007669"/>
    <property type="project" value="Ensembl"/>
</dbReference>
<dbReference type="CDD" id="cd23832">
    <property type="entry name" value="DRWD-C_FANCL"/>
    <property type="match status" value="1"/>
</dbReference>
<dbReference type="CDD" id="cd23831">
    <property type="entry name" value="DRWD-N_FANCL"/>
    <property type="match status" value="1"/>
</dbReference>
<dbReference type="CDD" id="cd23786">
    <property type="entry name" value="ELF_FANCL"/>
    <property type="match status" value="1"/>
</dbReference>
<dbReference type="CDD" id="cd16490">
    <property type="entry name" value="RING-CH-C4HC3_FANCL"/>
    <property type="match status" value="1"/>
</dbReference>
<dbReference type="FunFam" id="3.10.110.10:FF:000081">
    <property type="entry name" value="E3 ubiquitin-protein ligase FANCL"/>
    <property type="match status" value="1"/>
</dbReference>
<dbReference type="FunFam" id="3.10.110.20:FF:000001">
    <property type="entry name" value="E3 ubiquitin-protein ligase FANCL"/>
    <property type="match status" value="1"/>
</dbReference>
<dbReference type="FunFam" id="3.30.40.10:FF:000221">
    <property type="entry name" value="E3 ubiquitin-protein ligase FANCL isoform X2"/>
    <property type="match status" value="1"/>
</dbReference>
<dbReference type="Gene3D" id="3.10.110.20">
    <property type="entry name" value="RWD domain-like"/>
    <property type="match status" value="1"/>
</dbReference>
<dbReference type="Gene3D" id="3.10.110.10">
    <property type="entry name" value="Ubiquitin Conjugating Enzyme"/>
    <property type="match status" value="1"/>
</dbReference>
<dbReference type="Gene3D" id="3.30.40.10">
    <property type="entry name" value="Zinc/RING finger domain, C3HC4 (zinc finger)"/>
    <property type="match status" value="1"/>
</dbReference>
<dbReference type="InterPro" id="IPR026848">
    <property type="entry name" value="Fancl"/>
</dbReference>
<dbReference type="InterPro" id="IPR026850">
    <property type="entry name" value="FANCL_C"/>
</dbReference>
<dbReference type="InterPro" id="IPR043898">
    <property type="entry name" value="FANCL_d2"/>
</dbReference>
<dbReference type="InterPro" id="IPR044037">
    <property type="entry name" value="FANCL_d3"/>
</dbReference>
<dbReference type="InterPro" id="IPR043003">
    <property type="entry name" value="FANCL_d3_sf"/>
</dbReference>
<dbReference type="InterPro" id="IPR019162">
    <property type="entry name" value="FancL_WD-rpt_cont_dom"/>
</dbReference>
<dbReference type="InterPro" id="IPR016135">
    <property type="entry name" value="UBQ-conjugating_enzyme/RWD"/>
</dbReference>
<dbReference type="InterPro" id="IPR013083">
    <property type="entry name" value="Znf_RING/FYVE/PHD"/>
</dbReference>
<dbReference type="PANTHER" id="PTHR13206:SF0">
    <property type="entry name" value="E3 UBIQUITIN-PROTEIN LIGASE FANCL"/>
    <property type="match status" value="1"/>
</dbReference>
<dbReference type="PANTHER" id="PTHR13206">
    <property type="entry name" value="UBIQUITIN LIGASE PROTEIN PHF9 FANCONI ANEMIA GROUP L PROTEIN"/>
    <property type="match status" value="1"/>
</dbReference>
<dbReference type="Pfam" id="PF11793">
    <property type="entry name" value="FANCL_C"/>
    <property type="match status" value="1"/>
</dbReference>
<dbReference type="Pfam" id="PF09765">
    <property type="entry name" value="FANCL_d1"/>
    <property type="match status" value="1"/>
</dbReference>
<dbReference type="Pfam" id="PF18890">
    <property type="entry name" value="FANCL_d2"/>
    <property type="match status" value="1"/>
</dbReference>
<dbReference type="Pfam" id="PF18891">
    <property type="entry name" value="FANCL_d3"/>
    <property type="match status" value="1"/>
</dbReference>
<dbReference type="SMART" id="SM01197">
    <property type="entry name" value="FANCL_C"/>
    <property type="match status" value="1"/>
</dbReference>
<dbReference type="SUPFAM" id="SSF57850">
    <property type="entry name" value="RING/U-box"/>
    <property type="match status" value="1"/>
</dbReference>
<proteinExistence type="evidence at protein level"/>
<evidence type="ECO:0000250" key="1">
    <source>
        <dbReference type="UniProtKB" id="Q9CR14"/>
    </source>
</evidence>
<evidence type="ECO:0000255" key="2">
    <source>
        <dbReference type="PROSITE-ProRule" id="PRU00175"/>
    </source>
</evidence>
<evidence type="ECO:0000269" key="3">
    <source>
    </source>
</evidence>
<evidence type="ECO:0000269" key="4">
    <source>
    </source>
</evidence>
<evidence type="ECO:0000269" key="5">
    <source>
    </source>
</evidence>
<evidence type="ECO:0000269" key="6">
    <source>
    </source>
</evidence>
<evidence type="ECO:0000269" key="7">
    <source>
    </source>
</evidence>
<evidence type="ECO:0000269" key="8">
    <source>
    </source>
</evidence>
<evidence type="ECO:0000269" key="9">
    <source>
    </source>
</evidence>
<evidence type="ECO:0000269" key="10">
    <source>
    </source>
</evidence>
<evidence type="ECO:0000269" key="11">
    <source>
    </source>
</evidence>
<evidence type="ECO:0000269" key="12">
    <source>
    </source>
</evidence>
<evidence type="ECO:0000269" key="13">
    <source>
    </source>
</evidence>
<evidence type="ECO:0000303" key="14">
    <source>
    </source>
</evidence>
<evidence type="ECO:0000305" key="15"/>
<evidence type="ECO:0007744" key="16">
    <source>
        <dbReference type="PDB" id="4CCG"/>
    </source>
</evidence>
<evidence type="ECO:0007744" key="17">
    <source>
    </source>
</evidence>
<evidence type="ECO:0007829" key="18">
    <source>
        <dbReference type="PDB" id="3ZQS"/>
    </source>
</evidence>
<evidence type="ECO:0007829" key="19">
    <source>
        <dbReference type="PDB" id="4CCG"/>
    </source>
</evidence>
<comment type="function">
    <text evidence="3 6 7 9 10 13">Ubiquitin ligase protein that mediates monoubiquitination of FANCD2 in the presence of UBE2T, a key step in the DNA damage pathway (PubMed:12973351, PubMed:16916645, PubMed:17938197, PubMed:19111657, PubMed:24389026). Also mediates monoubiquitination of FANCI (PubMed:19589784). May stimulate the ubiquitin release from UBE2W. May be required for proper primordial germ cell proliferation in the embryonic stage, whereas it is probably not needed for spermatogonial proliferation after birth.</text>
</comment>
<comment type="catalytic activity">
    <reaction evidence="3 6 9 10">
        <text>S-ubiquitinyl-[E2 ubiquitin-conjugating enzyme]-L-cysteine + [acceptor protein]-L-lysine = [E2 ubiquitin-conjugating enzyme]-L-cysteine + N(6)-ubiquitinyl-[acceptor protein]-L-lysine.</text>
        <dbReference type="EC" id="2.3.2.27"/>
    </reaction>
</comment>
<comment type="pathway">
    <text>Protein modification; protein ubiquitination.</text>
</comment>
<comment type="subunit">
    <text evidence="1 3 4 5 6 7 8 9 11 12 13">Interacts with GGN (By similarity). Belongs to the multisubunit FA complex composed of FANCA, FANCB, FANCC, FANCE, FANCF, FANCG, FANCL/PHF9 and FANCM (PubMed:12973351, PubMed:15502827, PubMed:16116422, PubMed:22343915). The complex is not found in FA patients. In complex with FANCF, FANCA and FANCG, but not with FANCC, nor FANCE, interacts with HES1; this interaction may be essential for the stability and nuclear localization of FA core complex proteins (PubMed:18550849). Interacts with FANCI (PubMed:21775430). Directly interacts (via the RING-type zinc finger) with UBE2T and UBE2W (PubMed:16916645, PubMed:17938197, PubMed:19111657, PubMed:21775430, PubMed:24389026).</text>
</comment>
<comment type="interaction">
    <interactant intactId="EBI-2339898">
        <id>Q9NW38</id>
    </interactant>
    <interactant intactId="EBI-11976299">
        <id>Q5BKX5-3</id>
        <label>ACTMAP</label>
    </interactant>
    <organismsDiffer>false</organismsDiffer>
    <experiments>3</experiments>
</comment>
<comment type="interaction">
    <interactant intactId="EBI-2339898">
        <id>Q9NW38</id>
    </interactant>
    <interactant intactId="EBI-14493093">
        <id>Q3KP44</id>
        <label>ANKRD55</label>
    </interactant>
    <organismsDiffer>false</organismsDiffer>
    <experiments>3</experiments>
</comment>
<comment type="interaction">
    <interactant intactId="EBI-2339898">
        <id>Q9NW38</id>
    </interactant>
    <interactant intactId="EBI-713602">
        <id>Q9BQD7</id>
        <label>ANTKMT</label>
    </interactant>
    <organismsDiffer>false</organismsDiffer>
    <experiments>3</experiments>
</comment>
<comment type="interaction">
    <interactant intactId="EBI-2339898">
        <id>Q9NW38</id>
    </interactant>
    <interactant intactId="EBI-3447299">
        <id>O43307</id>
        <label>ARHGEF9</label>
    </interactant>
    <organismsDiffer>false</organismsDiffer>
    <experiments>3</experiments>
</comment>
<comment type="interaction">
    <interactant intactId="EBI-2339898">
        <id>Q9NW38</id>
    </interactant>
    <interactant intactId="EBI-10179719">
        <id>A2RRN7</id>
        <label>CADPS</label>
    </interactant>
    <organismsDiffer>false</organismsDiffer>
    <experiments>3</experiments>
</comment>
<comment type="interaction">
    <interactant intactId="EBI-2339898">
        <id>Q9NW38</id>
    </interactant>
    <interactant intactId="EBI-12261896">
        <id>Q5T4B2</id>
        <label>CERCAM</label>
    </interactant>
    <organismsDiffer>false</organismsDiffer>
    <experiments>3</experiments>
</comment>
<comment type="interaction">
    <interactant intactId="EBI-2339898">
        <id>Q9NW38</id>
    </interactant>
    <interactant intactId="EBI-743375">
        <id>Q9NX63</id>
        <label>CHCHD3</label>
    </interactant>
    <organismsDiffer>false</organismsDiffer>
    <experiments>6</experiments>
</comment>
<comment type="interaction">
    <interactant intactId="EBI-2339898">
        <id>Q9NW38</id>
    </interactant>
    <interactant intactId="EBI-751587">
        <id>Q9GZU7</id>
        <label>CTDSP1</label>
    </interactant>
    <organismsDiffer>false</organismsDiffer>
    <experiments>3</experiments>
</comment>
<comment type="interaction">
    <interactant intactId="EBI-2339898">
        <id>Q9NW38</id>
    </interactant>
    <interactant intactId="EBI-12102608">
        <id>Q6BCY4-2</id>
        <label>CYB5R2</label>
    </interactant>
    <organismsDiffer>false</organismsDiffer>
    <experiments>3</experiments>
</comment>
<comment type="interaction">
    <interactant intactId="EBI-2339898">
        <id>Q9NW38</id>
    </interactant>
    <interactant intactId="EBI-3867333">
        <id>A8MQ03</id>
        <label>CYSRT1</label>
    </interactant>
    <organismsDiffer>false</organismsDiffer>
    <experiments>3</experiments>
</comment>
<comment type="interaction">
    <interactant intactId="EBI-2339898">
        <id>Q9NW38</id>
    </interactant>
    <interactant intactId="EBI-749139">
        <id>O95865</id>
        <label>DDAH2</label>
    </interactant>
    <organismsDiffer>false</organismsDiffer>
    <experiments>3</experiments>
</comment>
<comment type="interaction">
    <interactant intactId="EBI-2339898">
        <id>Q9NW38</id>
    </interactant>
    <interactant intactId="EBI-10174653">
        <id>Q8NF50-2</id>
        <label>DOCK8</label>
    </interactant>
    <organismsDiffer>false</organismsDiffer>
    <experiments>3</experiments>
</comment>
<comment type="interaction">
    <interactant intactId="EBI-2339898">
        <id>Q9NW38</id>
    </interactant>
    <interactant intactId="EBI-301024">
        <id>Q9NRA8</id>
        <label>EIF4ENIF1</label>
    </interactant>
    <organismsDiffer>false</organismsDiffer>
    <experiments>3</experiments>
</comment>
<comment type="interaction">
    <interactant intactId="EBI-2339898">
        <id>Q9NW38</id>
    </interactant>
    <interactant intactId="EBI-9090198">
        <id>P15976-2</id>
        <label>GATA1</label>
    </interactant>
    <organismsDiffer>false</organismsDiffer>
    <experiments>3</experiments>
</comment>
<comment type="interaction">
    <interactant intactId="EBI-2339898">
        <id>Q9NW38</id>
    </interactant>
    <interactant intactId="EBI-747754">
        <id>P28799</id>
        <label>GRN</label>
    </interactant>
    <organismsDiffer>false</organismsDiffer>
    <experiments>3</experiments>
</comment>
<comment type="interaction">
    <interactant intactId="EBI-2339898">
        <id>Q9NW38</id>
    </interactant>
    <interactant intactId="EBI-745201">
        <id>Q9BSH5</id>
        <label>HDHD3</label>
    </interactant>
    <organismsDiffer>false</organismsDiffer>
    <experiments>3</experiments>
</comment>
<comment type="interaction">
    <interactant intactId="EBI-2339898">
        <id>Q9NW38</id>
    </interactant>
    <interactant intactId="EBI-12822515">
        <id>P09016</id>
        <label>HOXD4</label>
    </interactant>
    <organismsDiffer>false</organismsDiffer>
    <experiments>3</experiments>
</comment>
<comment type="interaction">
    <interactant intactId="EBI-2339898">
        <id>Q9NW38</id>
    </interactant>
    <interactant intactId="EBI-713450">
        <id>Q02363</id>
        <label>ID2</label>
    </interactant>
    <organismsDiffer>false</organismsDiffer>
    <experiments>3</experiments>
</comment>
<comment type="interaction">
    <interactant intactId="EBI-2339898">
        <id>Q9NW38</id>
    </interactant>
    <interactant intactId="EBI-8638439">
        <id>Q8IYA8</id>
        <label>IHO1</label>
    </interactant>
    <organismsDiffer>false</organismsDiffer>
    <experiments>3</experiments>
</comment>
<comment type="interaction">
    <interactant intactId="EBI-2339898">
        <id>Q9NW38</id>
    </interactant>
    <interactant intactId="EBI-747204">
        <id>Q9UKT9</id>
        <label>IKZF3</label>
    </interactant>
    <organismsDiffer>false</organismsDiffer>
    <experiments>3</experiments>
</comment>
<comment type="interaction">
    <interactant intactId="EBI-2339898">
        <id>Q9NW38</id>
    </interactant>
    <interactant intactId="EBI-2125614">
        <id>Q9BVG8</id>
        <label>KIFC3</label>
    </interactant>
    <organismsDiffer>false</organismsDiffer>
    <experiments>3</experiments>
</comment>
<comment type="interaction">
    <interactant intactId="EBI-2339898">
        <id>Q9NW38</id>
    </interactant>
    <interactant intactId="EBI-14069005">
        <id>Q9BVG8-5</id>
        <label>KIFC3</label>
    </interactant>
    <organismsDiffer>false</organismsDiffer>
    <experiments>3</experiments>
</comment>
<comment type="interaction">
    <interactant intactId="EBI-2339898">
        <id>Q9NW38</id>
    </interactant>
    <interactant intactId="EBI-1052037">
        <id>Q8IUC1</id>
        <label>KRTAP11-1</label>
    </interactant>
    <organismsDiffer>false</organismsDiffer>
    <experiments>3</experiments>
</comment>
<comment type="interaction">
    <interactant intactId="EBI-2339898">
        <id>Q9NW38</id>
    </interactant>
    <interactant intactId="EBI-11953846">
        <id>Q52LG2</id>
        <label>KRTAP13-2</label>
    </interactant>
    <organismsDiffer>false</organismsDiffer>
    <experiments>3</experiments>
</comment>
<comment type="interaction">
    <interactant intactId="EBI-2339898">
        <id>Q9NW38</id>
    </interactant>
    <interactant intactId="EBI-12805508">
        <id>Q3LI70</id>
        <label>KRTAP19-6</label>
    </interactant>
    <organismsDiffer>false</organismsDiffer>
    <experiments>3</experiments>
</comment>
<comment type="interaction">
    <interactant intactId="EBI-2339898">
        <id>Q9NW38</id>
    </interactant>
    <interactant intactId="EBI-741037">
        <id>Q9BRK4</id>
        <label>LZTS2</label>
    </interactant>
    <organismsDiffer>false</organismsDiffer>
    <experiments>3</experiments>
</comment>
<comment type="interaction">
    <interactant intactId="EBI-2339898">
        <id>Q9NW38</id>
    </interactant>
    <interactant intactId="EBI-10174029">
        <id>A6NJ78-4</id>
        <label>METTL15</label>
    </interactant>
    <organismsDiffer>false</organismsDiffer>
    <experiments>3</experiments>
</comment>
<comment type="interaction">
    <interactant intactId="EBI-2339898">
        <id>Q9NW38</id>
    </interactant>
    <interactant intactId="EBI-9675802">
        <id>Q6PF18</id>
        <label>MORN3</label>
    </interactant>
    <organismsDiffer>false</organismsDiffer>
    <experiments>3</experiments>
</comment>
<comment type="interaction">
    <interactant intactId="EBI-2339898">
        <id>Q9NW38</id>
    </interactant>
    <interactant intactId="EBI-603340">
        <id>P49720</id>
        <label>PSMB3</label>
    </interactant>
    <organismsDiffer>false</organismsDiffer>
    <experiments>3</experiments>
</comment>
<comment type="interaction">
    <interactant intactId="EBI-2339898">
        <id>Q9NW38</id>
    </interactant>
    <interactant intactId="EBI-2512147">
        <id>Q8IUH3</id>
        <label>RBM45</label>
    </interactant>
    <organismsDiffer>false</organismsDiffer>
    <experiments>3</experiments>
</comment>
<comment type="interaction">
    <interactant intactId="EBI-2339898">
        <id>Q9NW38</id>
    </interactant>
    <interactant intactId="EBI-10182375">
        <id>Q9UFD9</id>
        <label>RIMBP3</label>
    </interactant>
    <organismsDiffer>false</organismsDiffer>
    <experiments>3</experiments>
</comment>
<comment type="interaction">
    <interactant intactId="EBI-2339898">
        <id>Q9NW38</id>
    </interactant>
    <interactant intactId="EBI-396669">
        <id>Q9Y3C5</id>
        <label>RNF11</label>
    </interactant>
    <organismsDiffer>false</organismsDiffer>
    <experiments>3</experiments>
</comment>
<comment type="interaction">
    <interactant intactId="EBI-2339898">
        <id>Q9NW38</id>
    </interactant>
    <interactant intactId="EBI-748391">
        <id>Q9BWG6</id>
        <label>SCNM1</label>
    </interactant>
    <organismsDiffer>false</organismsDiffer>
    <experiments>3</experiments>
</comment>
<comment type="interaction">
    <interactant intactId="EBI-2339898">
        <id>Q9NW38</id>
    </interactant>
    <interactant intactId="EBI-747719">
        <id>Q96H20</id>
        <label>SNF8</label>
    </interactant>
    <organismsDiffer>false</organismsDiffer>
    <experiments>3</experiments>
</comment>
<comment type="interaction">
    <interactant intactId="EBI-2339898">
        <id>Q9NW38</id>
    </interactant>
    <interactant intactId="EBI-18616594">
        <id>Q8IXS7</id>
        <label>SRGAP3</label>
    </interactant>
    <organismsDiffer>false</organismsDiffer>
    <experiments>3</experiments>
</comment>
<comment type="interaction">
    <interactant intactId="EBI-2339898">
        <id>Q9NW38</id>
    </interactant>
    <interactant intactId="EBI-2212028">
        <id>Q9Y2D8</id>
        <label>SSX2IP</label>
    </interactant>
    <organismsDiffer>false</organismsDiffer>
    <experiments>3</experiments>
</comment>
<comment type="interaction">
    <interactant intactId="EBI-2339898">
        <id>Q9NW38</id>
    </interactant>
    <interactant intactId="EBI-717422">
        <id>Q12800</id>
        <label>TFCP2</label>
    </interactant>
    <organismsDiffer>false</organismsDiffer>
    <experiments>3</experiments>
</comment>
<comment type="interaction">
    <interactant intactId="EBI-2339898">
        <id>Q9NW38</id>
    </interactant>
    <interactant intactId="EBI-9090990">
        <id>Q5W5X9-3</id>
        <label>TTC23</label>
    </interactant>
    <organismsDiffer>false</organismsDiffer>
    <experiments>3</experiments>
</comment>
<comment type="interaction">
    <interactant intactId="EBI-2339898">
        <id>Q9NW38</id>
    </interactant>
    <interactant intactId="EBI-12068150">
        <id>Q6NVU6</id>
        <label>UFSP1</label>
    </interactant>
    <organismsDiffer>false</organismsDiffer>
    <experiments>3</experiments>
</comment>
<comment type="interaction">
    <interactant intactId="EBI-2339898">
        <id>Q9NW38</id>
    </interactant>
    <interactant intactId="EBI-7850213">
        <id>Q9UDW3</id>
        <label>ZMAT5</label>
    </interactant>
    <organismsDiffer>false</organismsDiffer>
    <experiments>3</experiments>
</comment>
<comment type="interaction">
    <interactant intactId="EBI-2339898">
        <id>Q9NW38</id>
    </interactant>
    <interactant intactId="EBI-12357267">
        <id>Q9NZL3</id>
        <label>ZNF224</label>
    </interactant>
    <organismsDiffer>false</organismsDiffer>
    <experiments>3</experiments>
</comment>
<comment type="interaction">
    <interactant intactId="EBI-2339898">
        <id>Q9NW38</id>
    </interactant>
    <interactant intactId="EBI-745520">
        <id>Q9P0T4</id>
        <label>ZNF581</label>
    </interactant>
    <organismsDiffer>false</organismsDiffer>
    <experiments>3</experiments>
</comment>
<comment type="interaction">
    <interactant intactId="EBI-2339898">
        <id>Q9NW38</id>
    </interactant>
    <interactant intactId="EBI-10251462">
        <id>Q6NX45</id>
        <label>ZNF774</label>
    </interactant>
    <organismsDiffer>false</organismsDiffer>
    <experiments>3</experiments>
</comment>
<comment type="interaction">
    <interactant intactId="EBI-16088720">
        <id>Q9NW38-1</id>
    </interactant>
    <interactant intactId="EBI-2130165">
        <id>Q9NPD8</id>
        <label>UBE2T</label>
    </interactant>
    <organismsDiffer>false</organismsDiffer>
    <experiments>3</experiments>
</comment>
<comment type="subcellular location">
    <subcellularLocation>
        <location evidence="1">Cytoplasm</location>
    </subcellularLocation>
    <subcellularLocation>
        <location evidence="1">Nucleus</location>
    </subcellularLocation>
</comment>
<comment type="alternative products">
    <event type="alternative splicing"/>
    <isoform>
        <id>Q9NW38-1</id>
        <name>1</name>
        <sequence type="displayed"/>
    </isoform>
    <isoform>
        <id>Q9NW38-2</id>
        <name>2</name>
        <sequence type="described" ref="VSP_041727"/>
    </isoform>
</comment>
<comment type="domain">
    <text evidence="11">The UBC-RWD region (URD) region mediates interaction with FANCI and FANCD2.</text>
</comment>
<comment type="PTM">
    <text>The RING-type zinc finger domain is monoubiquitinated in the presence of UBE2T and UBE2W.</text>
</comment>
<comment type="disease" evidence="3">
    <disease id="DI-03153">
        <name>Fanconi anemia complementation group L</name>
        <acronym>FANCL</acronym>
        <description>A disorder affecting all bone marrow elements and resulting in anemia, leukopenia and thrombopenia. It is associated with cardiac, renal and limb malformations, dermal pigmentary changes, and a predisposition to the development of malignancies. At the cellular level it is associated with hypersensitivity to DNA-damaging agents, chromosomal instability (increased chromosome breakage) and defective DNA repair.</description>
        <dbReference type="MIM" id="614083"/>
    </disease>
    <text>The disease is caused by variants affecting the gene represented in this entry.</text>
</comment>
<comment type="caution">
    <text evidence="15">Although PubMed:12724401 reports that it contains a PHD-type zinc finger, it contains a RING-type zinc finger. Moreover, PHD-type zinc fingers do not have any ubiquitin ligase activity.</text>
</comment>
<comment type="online information" name="Fanconi Anemia Mutation Database">
    <link uri="https://www2.rockefeller.edu/fanconi/genes/jumpl"/>
</comment>
<protein>
    <recommendedName>
        <fullName>E3 ubiquitin-protein ligase FANCL</fullName>
        <ecNumber evidence="3 6 9 10">2.3.2.27</ecNumber>
    </recommendedName>
    <alternativeName>
        <fullName>Fanconi anemia group L protein</fullName>
    </alternativeName>
    <alternativeName>
        <fullName>Fanconi anemia-associated polypeptide of 43 kDa</fullName>
        <shortName>FAAP43</shortName>
    </alternativeName>
    <alternativeName>
        <fullName evidence="15">RING-type E3 ubiquitin transferase FANCL</fullName>
    </alternativeName>
</protein>
<keyword id="KW-0002">3D-structure</keyword>
<keyword id="KW-0007">Acetylation</keyword>
<keyword id="KW-0025">Alternative splicing</keyword>
<keyword id="KW-0963">Cytoplasm</keyword>
<keyword id="KW-0227">DNA damage</keyword>
<keyword id="KW-0234">DNA repair</keyword>
<keyword id="KW-0923">Fanconi anemia</keyword>
<keyword id="KW-0479">Metal-binding</keyword>
<keyword id="KW-0539">Nucleus</keyword>
<keyword id="KW-1267">Proteomics identification</keyword>
<keyword id="KW-1185">Reference proteome</keyword>
<keyword id="KW-0808">Transferase</keyword>
<keyword id="KW-0832">Ubl conjugation</keyword>
<keyword id="KW-0833">Ubl conjugation pathway</keyword>
<keyword id="KW-0862">Zinc</keyword>
<keyword id="KW-0863">Zinc-finger</keyword>
<gene>
    <name type="primary">FANCL</name>
    <name type="synonym">PHF9</name>
</gene>
<name>FANCL_HUMAN</name>
<feature type="initiator methionine" description="Removed" evidence="17">
    <location>
        <position position="1"/>
    </location>
</feature>
<feature type="chain" id="PRO_0000055908" description="E3 ubiquitin-protein ligase FANCL">
    <location>
        <begin position="2"/>
        <end position="375"/>
    </location>
</feature>
<feature type="zinc finger region" description="RING-type; degenerate" evidence="2">
    <location>
        <begin position="307"/>
        <end position="363"/>
    </location>
</feature>
<feature type="region of interest" description="UBC-RWD region (URD)">
    <location>
        <begin position="104"/>
        <end position="294"/>
    </location>
</feature>
<feature type="binding site" evidence="16">
    <location>
        <position position="307"/>
    </location>
    <ligand>
        <name>Zn(2+)</name>
        <dbReference type="ChEBI" id="CHEBI:29105"/>
        <label>1</label>
    </ligand>
</feature>
<feature type="binding site" evidence="16">
    <location>
        <position position="310"/>
    </location>
    <ligand>
        <name>Zn(2+)</name>
        <dbReference type="ChEBI" id="CHEBI:29105"/>
        <label>1</label>
    </ligand>
</feature>
<feature type="binding site" evidence="16">
    <location>
        <position position="324"/>
    </location>
    <ligand>
        <name>Zn(2+)</name>
        <dbReference type="ChEBI" id="CHEBI:29105"/>
        <label>2</label>
    </ligand>
</feature>
<feature type="binding site" evidence="16">
    <location>
        <position position="329"/>
    </location>
    <ligand>
        <name>Zn(2+)</name>
        <dbReference type="ChEBI" id="CHEBI:29105"/>
        <label>2</label>
    </ligand>
</feature>
<feature type="binding site" evidence="16">
    <location>
        <position position="334"/>
    </location>
    <ligand>
        <name>Zn(2+)</name>
        <dbReference type="ChEBI" id="CHEBI:29105"/>
        <label>1</label>
    </ligand>
</feature>
<feature type="binding site" evidence="16">
    <location>
        <position position="337"/>
    </location>
    <ligand>
        <name>Zn(2+)</name>
        <dbReference type="ChEBI" id="CHEBI:29105"/>
        <label>1</label>
    </ligand>
</feature>
<feature type="binding site" evidence="16">
    <location>
        <position position="359"/>
    </location>
    <ligand>
        <name>Zn(2+)</name>
        <dbReference type="ChEBI" id="CHEBI:29105"/>
        <label>2</label>
    </ligand>
</feature>
<feature type="binding site" evidence="16">
    <location>
        <position position="362"/>
    </location>
    <ligand>
        <name>Zn(2+)</name>
        <dbReference type="ChEBI" id="CHEBI:29105"/>
        <label>2</label>
    </ligand>
</feature>
<feature type="modified residue" description="N-acetylalanine" evidence="17">
    <location>
        <position position="2"/>
    </location>
</feature>
<feature type="splice variant" id="VSP_041727" description="In isoform 2." evidence="14">
    <original>T</original>
    <variation>TPQVNS</variation>
    <location>
        <position position="178"/>
    </location>
</feature>
<feature type="sequence variant" id="VAR_052082" description="In dbSNP:rs36059257.">
    <original>S</original>
    <variation>F</variation>
    <location>
        <position position="144"/>
    </location>
</feature>
<feature type="mutagenesis site" description="No effect on interaction with FANCI and FANCD2." evidence="11">
    <original>VY</original>
    <variation>AA</variation>
    <location>
        <begin position="127"/>
        <end position="128"/>
    </location>
</feature>
<feature type="mutagenesis site" description="No effect on interaction with FANCI and FANCD2; when associated with A-166." evidence="11">
    <original>L</original>
    <variation>A</variation>
    <location>
        <position position="149"/>
    </location>
</feature>
<feature type="mutagenesis site" description="Abolishes UBE2T charging." evidence="9">
    <original>YP</original>
    <variation>AA</variation>
    <location>
        <begin position="158"/>
        <end position="159"/>
    </location>
</feature>
<feature type="mutagenesis site" description="Does not affect interaction with FANCI and FANCD2; when associated with A-149." evidence="11">
    <original>F</original>
    <variation>A</variation>
    <location>
        <position position="166"/>
    </location>
</feature>
<feature type="mutagenesis site" description="Impairs interaction with FANCI and FANCD2." evidence="11">
    <original>WVL</original>
    <variation>AVA</variation>
    <location>
        <begin position="212"/>
        <end position="214"/>
    </location>
</feature>
<feature type="mutagenesis site" description="Impairs interaction with FANCI and FANCD2; when associated with A-252, A-254 and A-265." evidence="11">
    <original>L</original>
    <variation>A</variation>
    <location>
        <position position="248"/>
    </location>
</feature>
<feature type="mutagenesis site" description="Impairs interaction with FANCI and FANCD2; when associated with A-248, A-254 and A-265." evidence="11">
    <original>F</original>
    <variation>A</variation>
    <location>
        <position position="252"/>
    </location>
</feature>
<feature type="mutagenesis site" description="Impairs interaction with FANCI and FANCD2; when associated with A-248, A-252 and A-265." evidence="11">
    <original>L</original>
    <variation>A</variation>
    <location>
        <position position="254"/>
    </location>
</feature>
<feature type="mutagenesis site" description="Impairs interaction with FANCI and FANCD2; when associated with A-248, A-252 and A-254." evidence="11">
    <original>I</original>
    <variation>A</variation>
    <location>
        <position position="265"/>
    </location>
</feature>
<feature type="mutagenesis site" description="Abolishes ubiquitin ligase activity." evidence="3 6 7 9 10">
    <original>C</original>
    <variation>A</variation>
    <location>
        <position position="307"/>
    </location>
</feature>
<feature type="mutagenesis site" description="Loss of interaction with UBE2T." evidence="13">
    <original>I</original>
    <variation>A</variation>
    <location>
        <position position="309"/>
    </location>
</feature>
<feature type="mutagenesis site" description="Abolishes ubiquitin ligase activity." evidence="3 7">
    <original>C</original>
    <variation>A</variation>
    <location>
        <position position="310"/>
    </location>
</feature>
<feature type="mutagenesis site" description="Loss of interaction with UBE2T." evidence="13">
    <original>Y</original>
    <variation>A</variation>
    <location>
        <position position="311"/>
    </location>
</feature>
<feature type="mutagenesis site" description="Loss of interaction with UBE2T." evidence="13">
    <original>W</original>
    <variation>A</variation>
    <location>
        <position position="341"/>
    </location>
</feature>
<feature type="mutagenesis site" description="Abolishes interaction with UBE2T and ubiquitin ligase activity." evidence="6">
    <original>W</original>
    <variation>G</variation>
    <location>
        <position position="341"/>
    </location>
</feature>
<feature type="mutagenesis site" description="Abolishes ubiquitin ligase activity." evidence="9">
    <original>C</original>
    <variation>A</variation>
    <location>
        <position position="359"/>
    </location>
</feature>
<feature type="sequence conflict" description="In Ref. 1; BAA91548." evidence="15" ref="1">
    <original>S</original>
    <variation>P</variation>
    <location>
        <position position="77"/>
    </location>
</feature>
<feature type="helix" evidence="18">
    <location>
        <begin position="114"/>
        <end position="121"/>
    </location>
</feature>
<feature type="helix" evidence="18">
    <location>
        <begin position="123"/>
        <end position="125"/>
    </location>
</feature>
<feature type="strand" evidence="18">
    <location>
        <begin position="126"/>
        <end position="129"/>
    </location>
</feature>
<feature type="strand" evidence="18">
    <location>
        <begin position="133"/>
        <end position="141"/>
    </location>
</feature>
<feature type="strand" evidence="18">
    <location>
        <begin position="147"/>
        <end position="153"/>
    </location>
</feature>
<feature type="turn" evidence="18">
    <location>
        <begin position="156"/>
        <end position="160"/>
    </location>
</feature>
<feature type="strand" evidence="18">
    <location>
        <begin position="164"/>
        <end position="166"/>
    </location>
</feature>
<feature type="helix" evidence="18">
    <location>
        <begin position="183"/>
        <end position="196"/>
    </location>
</feature>
<feature type="helix" evidence="18">
    <location>
        <begin position="198"/>
        <end position="210"/>
    </location>
</feature>
<feature type="strand" evidence="18">
    <location>
        <begin position="213"/>
        <end position="218"/>
    </location>
</feature>
<feature type="strand" evidence="18">
    <location>
        <begin position="225"/>
        <end position="231"/>
    </location>
</feature>
<feature type="strand" evidence="18">
    <location>
        <begin position="234"/>
        <end position="239"/>
    </location>
</feature>
<feature type="strand" evidence="18">
    <location>
        <begin position="250"/>
        <end position="255"/>
    </location>
</feature>
<feature type="helix" evidence="18">
    <location>
        <begin position="257"/>
        <end position="270"/>
    </location>
</feature>
<feature type="helix" evidence="18">
    <location>
        <begin position="271"/>
        <end position="273"/>
    </location>
</feature>
<feature type="helix" evidence="18">
    <location>
        <begin position="280"/>
        <end position="288"/>
    </location>
</feature>
<feature type="turn" evidence="19">
    <location>
        <begin position="308"/>
        <end position="310"/>
    </location>
</feature>
<feature type="turn" evidence="19">
    <location>
        <begin position="327"/>
        <end position="329"/>
    </location>
</feature>
<feature type="helix" evidence="19">
    <location>
        <begin position="335"/>
        <end position="342"/>
    </location>
</feature>
<feature type="strand" evidence="19">
    <location>
        <begin position="349"/>
        <end position="351"/>
    </location>
</feature>
<feature type="strand" evidence="19">
    <location>
        <begin position="354"/>
        <end position="358"/>
    </location>
</feature>
<feature type="turn" evidence="19">
    <location>
        <begin position="360"/>
        <end position="362"/>
    </location>
</feature>
<feature type="strand" evidence="19">
    <location>
        <begin position="365"/>
        <end position="369"/>
    </location>
</feature>